<protein>
    <recommendedName>
        <fullName evidence="1">Phospho-N-acetylmuramoyl-pentapeptide-transferase</fullName>
        <ecNumber evidence="1">2.7.8.13</ecNumber>
    </recommendedName>
    <alternativeName>
        <fullName evidence="1">UDP-MurNAc-pentapeptide phosphotransferase</fullName>
    </alternativeName>
</protein>
<name>MRAY_ERWT9</name>
<comment type="function">
    <text evidence="1">Catalyzes the initial step of the lipid cycle reactions in the biosynthesis of the cell wall peptidoglycan: transfers peptidoglycan precursor phospho-MurNAc-pentapeptide from UDP-MurNAc-pentapeptide onto the lipid carrier undecaprenyl phosphate, yielding undecaprenyl-pyrophosphoryl-MurNAc-pentapeptide, known as lipid I.</text>
</comment>
<comment type="catalytic activity">
    <reaction evidence="1">
        <text>UDP-N-acetyl-alpha-D-muramoyl-L-alanyl-gamma-D-glutamyl-meso-2,6-diaminopimeloyl-D-alanyl-D-alanine + di-trans,octa-cis-undecaprenyl phosphate = di-trans,octa-cis-undecaprenyl diphospho-N-acetyl-alpha-D-muramoyl-L-alanyl-D-glutamyl-meso-2,6-diaminopimeloyl-D-alanyl-D-alanine + UMP</text>
        <dbReference type="Rhea" id="RHEA:28386"/>
        <dbReference type="ChEBI" id="CHEBI:57865"/>
        <dbReference type="ChEBI" id="CHEBI:60392"/>
        <dbReference type="ChEBI" id="CHEBI:61386"/>
        <dbReference type="ChEBI" id="CHEBI:61387"/>
        <dbReference type="EC" id="2.7.8.13"/>
    </reaction>
</comment>
<comment type="cofactor">
    <cofactor evidence="1">
        <name>Mg(2+)</name>
        <dbReference type="ChEBI" id="CHEBI:18420"/>
    </cofactor>
</comment>
<comment type="pathway">
    <text evidence="1">Cell wall biogenesis; peptidoglycan biosynthesis.</text>
</comment>
<comment type="subcellular location">
    <subcellularLocation>
        <location evidence="1">Cell inner membrane</location>
        <topology evidence="1">Multi-pass membrane protein</topology>
    </subcellularLocation>
</comment>
<comment type="similarity">
    <text evidence="1">Belongs to the glycosyltransferase 4 family. MraY subfamily.</text>
</comment>
<evidence type="ECO:0000255" key="1">
    <source>
        <dbReference type="HAMAP-Rule" id="MF_00038"/>
    </source>
</evidence>
<reference key="1">
    <citation type="journal article" date="2008" name="Environ. Microbiol.">
        <title>The genome of Erwinia tasmaniensis strain Et1/99, a non-pathogenic bacterium in the genus Erwinia.</title>
        <authorList>
            <person name="Kube M."/>
            <person name="Migdoll A.M."/>
            <person name="Mueller I."/>
            <person name="Kuhl H."/>
            <person name="Beck A."/>
            <person name="Reinhardt R."/>
            <person name="Geider K."/>
        </authorList>
    </citation>
    <scope>NUCLEOTIDE SEQUENCE [LARGE SCALE GENOMIC DNA]</scope>
    <source>
        <strain>DSM 17950 / CFBP 7177 / CIP 109463 / NCPPB 4357 / Et1/99</strain>
    </source>
</reference>
<gene>
    <name evidence="1" type="primary">mraY</name>
    <name type="ordered locus">ETA_07520</name>
</gene>
<proteinExistence type="inferred from homology"/>
<feature type="chain" id="PRO_1000090626" description="Phospho-N-acetylmuramoyl-pentapeptide-transferase">
    <location>
        <begin position="1"/>
        <end position="360"/>
    </location>
</feature>
<feature type="transmembrane region" description="Helical" evidence="1">
    <location>
        <begin position="26"/>
        <end position="46"/>
    </location>
</feature>
<feature type="transmembrane region" description="Helical" evidence="1">
    <location>
        <begin position="72"/>
        <end position="92"/>
    </location>
</feature>
<feature type="transmembrane region" description="Helical" evidence="1">
    <location>
        <begin position="94"/>
        <end position="114"/>
    </location>
</feature>
<feature type="transmembrane region" description="Helical" evidence="1">
    <location>
        <begin position="132"/>
        <end position="152"/>
    </location>
</feature>
<feature type="transmembrane region" description="Helical" evidence="1">
    <location>
        <begin position="168"/>
        <end position="188"/>
    </location>
</feature>
<feature type="transmembrane region" description="Helical" evidence="1">
    <location>
        <begin position="199"/>
        <end position="219"/>
    </location>
</feature>
<feature type="transmembrane region" description="Helical" evidence="1">
    <location>
        <begin position="236"/>
        <end position="256"/>
    </location>
</feature>
<feature type="transmembrane region" description="Helical" evidence="1">
    <location>
        <begin position="263"/>
        <end position="283"/>
    </location>
</feature>
<feature type="transmembrane region" description="Helical" evidence="1">
    <location>
        <begin position="288"/>
        <end position="308"/>
    </location>
</feature>
<feature type="transmembrane region" description="Helical" evidence="1">
    <location>
        <begin position="338"/>
        <end position="358"/>
    </location>
</feature>
<accession>B2VD87</accession>
<organism>
    <name type="scientific">Erwinia tasmaniensis (strain DSM 17950 / CFBP 7177 / CIP 109463 / NCPPB 4357 / Et1/99)</name>
    <dbReference type="NCBI Taxonomy" id="465817"/>
    <lineage>
        <taxon>Bacteria</taxon>
        <taxon>Pseudomonadati</taxon>
        <taxon>Pseudomonadota</taxon>
        <taxon>Gammaproteobacteria</taxon>
        <taxon>Enterobacterales</taxon>
        <taxon>Erwiniaceae</taxon>
        <taxon>Erwinia</taxon>
    </lineage>
</organism>
<dbReference type="EC" id="2.7.8.13" evidence="1"/>
<dbReference type="EMBL" id="CU468135">
    <property type="protein sequence ID" value="CAO95798.1"/>
    <property type="molecule type" value="Genomic_DNA"/>
</dbReference>
<dbReference type="RefSeq" id="WP_012440500.1">
    <property type="nucleotide sequence ID" value="NC_010694.1"/>
</dbReference>
<dbReference type="SMR" id="B2VD87"/>
<dbReference type="STRING" id="465817.ETA_07520"/>
<dbReference type="GeneID" id="92238078"/>
<dbReference type="KEGG" id="eta:ETA_07520"/>
<dbReference type="eggNOG" id="COG0472">
    <property type="taxonomic scope" value="Bacteria"/>
</dbReference>
<dbReference type="HOGENOM" id="CLU_023982_0_0_6"/>
<dbReference type="OrthoDB" id="9805475at2"/>
<dbReference type="UniPathway" id="UPA00219"/>
<dbReference type="Proteomes" id="UP000001726">
    <property type="component" value="Chromosome"/>
</dbReference>
<dbReference type="GO" id="GO:0005886">
    <property type="term" value="C:plasma membrane"/>
    <property type="evidence" value="ECO:0007669"/>
    <property type="project" value="UniProtKB-SubCell"/>
</dbReference>
<dbReference type="GO" id="GO:0046872">
    <property type="term" value="F:metal ion binding"/>
    <property type="evidence" value="ECO:0007669"/>
    <property type="project" value="UniProtKB-KW"/>
</dbReference>
<dbReference type="GO" id="GO:0008963">
    <property type="term" value="F:phospho-N-acetylmuramoyl-pentapeptide-transferase activity"/>
    <property type="evidence" value="ECO:0007669"/>
    <property type="project" value="UniProtKB-UniRule"/>
</dbReference>
<dbReference type="GO" id="GO:0051992">
    <property type="term" value="F:UDP-N-acetylmuramoyl-L-alanyl-D-glutamyl-meso-2,6-diaminopimelyl-D-alanyl-D-alanine:undecaprenyl-phosphate transferase activity"/>
    <property type="evidence" value="ECO:0007669"/>
    <property type="project" value="RHEA"/>
</dbReference>
<dbReference type="GO" id="GO:0051301">
    <property type="term" value="P:cell division"/>
    <property type="evidence" value="ECO:0007669"/>
    <property type="project" value="UniProtKB-KW"/>
</dbReference>
<dbReference type="GO" id="GO:0071555">
    <property type="term" value="P:cell wall organization"/>
    <property type="evidence" value="ECO:0007669"/>
    <property type="project" value="UniProtKB-KW"/>
</dbReference>
<dbReference type="GO" id="GO:0009252">
    <property type="term" value="P:peptidoglycan biosynthetic process"/>
    <property type="evidence" value="ECO:0007669"/>
    <property type="project" value="UniProtKB-UniRule"/>
</dbReference>
<dbReference type="GO" id="GO:0008360">
    <property type="term" value="P:regulation of cell shape"/>
    <property type="evidence" value="ECO:0007669"/>
    <property type="project" value="UniProtKB-KW"/>
</dbReference>
<dbReference type="CDD" id="cd06852">
    <property type="entry name" value="GT_MraY"/>
    <property type="match status" value="1"/>
</dbReference>
<dbReference type="HAMAP" id="MF_00038">
    <property type="entry name" value="MraY"/>
    <property type="match status" value="1"/>
</dbReference>
<dbReference type="InterPro" id="IPR000715">
    <property type="entry name" value="Glycosyl_transferase_4"/>
</dbReference>
<dbReference type="InterPro" id="IPR003524">
    <property type="entry name" value="PNAcMuramoyl-5peptid_Trfase"/>
</dbReference>
<dbReference type="InterPro" id="IPR018480">
    <property type="entry name" value="PNAcMuramoyl-5peptid_Trfase_CS"/>
</dbReference>
<dbReference type="NCBIfam" id="TIGR00445">
    <property type="entry name" value="mraY"/>
    <property type="match status" value="1"/>
</dbReference>
<dbReference type="PANTHER" id="PTHR22926">
    <property type="entry name" value="PHOSPHO-N-ACETYLMURAMOYL-PENTAPEPTIDE-TRANSFERASE"/>
    <property type="match status" value="1"/>
</dbReference>
<dbReference type="PANTHER" id="PTHR22926:SF5">
    <property type="entry name" value="PHOSPHO-N-ACETYLMURAMOYL-PENTAPEPTIDE-TRANSFERASE HOMOLOG"/>
    <property type="match status" value="1"/>
</dbReference>
<dbReference type="Pfam" id="PF00953">
    <property type="entry name" value="Glycos_transf_4"/>
    <property type="match status" value="1"/>
</dbReference>
<dbReference type="Pfam" id="PF10555">
    <property type="entry name" value="MraY_sig1"/>
    <property type="match status" value="1"/>
</dbReference>
<dbReference type="PROSITE" id="PS01347">
    <property type="entry name" value="MRAY_1"/>
    <property type="match status" value="1"/>
</dbReference>
<dbReference type="PROSITE" id="PS01348">
    <property type="entry name" value="MRAY_2"/>
    <property type="match status" value="1"/>
</dbReference>
<sequence length="360" mass="40062">MLVWLAEHLVTFYSGFNVFSYLTFRAIVSLLTALFISLWMGPRMIARLQEMSFGQVVRNDGPESHFSKRGTPTMGGIMILTSITVSVLLWAYPSNPYVWCVLFVLVGYGIVGFVDDYRKVVRKDTKGLIARWKYFWQSAIALVVAFVMYMIGKDTPATELVVPFFKDVMPQLGLLYLLLAYFVIVGTSNAVNLTDGLDGLAIMPTVFVAAGFALVAWATGNVKFAEYLHIPYLRHAGELVIVCTAIVGAGLGFLWFNTYPAQVFMGDVGSLALGGALGTIAVLLRQEFLLVIMGGVFVVETLSVILQVGSFKLRGQRIFRMAPIHHHYELKGWPEPRVIVRFWIISLMLVLIGLATLKVR</sequence>
<keyword id="KW-0131">Cell cycle</keyword>
<keyword id="KW-0132">Cell division</keyword>
<keyword id="KW-0997">Cell inner membrane</keyword>
<keyword id="KW-1003">Cell membrane</keyword>
<keyword id="KW-0133">Cell shape</keyword>
<keyword id="KW-0961">Cell wall biogenesis/degradation</keyword>
<keyword id="KW-0460">Magnesium</keyword>
<keyword id="KW-0472">Membrane</keyword>
<keyword id="KW-0479">Metal-binding</keyword>
<keyword id="KW-0573">Peptidoglycan synthesis</keyword>
<keyword id="KW-1185">Reference proteome</keyword>
<keyword id="KW-0808">Transferase</keyword>
<keyword id="KW-0812">Transmembrane</keyword>
<keyword id="KW-1133">Transmembrane helix</keyword>